<name>AROC_STRA5</name>
<protein>
    <recommendedName>
        <fullName evidence="1">Chorismate synthase</fullName>
        <shortName evidence="1">CS</shortName>
        <ecNumber evidence="1">4.2.3.5</ecNumber>
    </recommendedName>
    <alternativeName>
        <fullName evidence="1">5-enolpyruvylshikimate-3-phosphate phospholyase</fullName>
    </alternativeName>
</protein>
<organism>
    <name type="scientific">Streptococcus agalactiae serotype V (strain ATCC BAA-611 / 2603 V/R)</name>
    <dbReference type="NCBI Taxonomy" id="208435"/>
    <lineage>
        <taxon>Bacteria</taxon>
        <taxon>Bacillati</taxon>
        <taxon>Bacillota</taxon>
        <taxon>Bacilli</taxon>
        <taxon>Lactobacillales</taxon>
        <taxon>Streptococcaceae</taxon>
        <taxon>Streptococcus</taxon>
    </lineage>
</organism>
<feature type="chain" id="PRO_0000140651" description="Chorismate synthase">
    <location>
        <begin position="1"/>
        <end position="388"/>
    </location>
</feature>
<feature type="binding site" evidence="1">
    <location>
        <position position="39"/>
    </location>
    <ligand>
        <name>NADP(+)</name>
        <dbReference type="ChEBI" id="CHEBI:58349"/>
    </ligand>
</feature>
<feature type="binding site" evidence="1">
    <location>
        <position position="45"/>
    </location>
    <ligand>
        <name>NADP(+)</name>
        <dbReference type="ChEBI" id="CHEBI:58349"/>
    </ligand>
</feature>
<feature type="binding site" evidence="1">
    <location>
        <begin position="130"/>
        <end position="132"/>
    </location>
    <ligand>
        <name>FMN</name>
        <dbReference type="ChEBI" id="CHEBI:58210"/>
    </ligand>
</feature>
<feature type="binding site" evidence="1">
    <location>
        <begin position="251"/>
        <end position="252"/>
    </location>
    <ligand>
        <name>FMN</name>
        <dbReference type="ChEBI" id="CHEBI:58210"/>
    </ligand>
</feature>
<feature type="binding site" evidence="1">
    <location>
        <position position="296"/>
    </location>
    <ligand>
        <name>FMN</name>
        <dbReference type="ChEBI" id="CHEBI:58210"/>
    </ligand>
</feature>
<feature type="binding site" evidence="1">
    <location>
        <begin position="311"/>
        <end position="315"/>
    </location>
    <ligand>
        <name>FMN</name>
        <dbReference type="ChEBI" id="CHEBI:58210"/>
    </ligand>
</feature>
<feature type="binding site" evidence="1">
    <location>
        <position position="337"/>
    </location>
    <ligand>
        <name>FMN</name>
        <dbReference type="ChEBI" id="CHEBI:58210"/>
    </ligand>
</feature>
<gene>
    <name evidence="1" type="primary">aroC</name>
    <name type="ordered locus">SAG1377</name>
</gene>
<proteinExistence type="inferred from homology"/>
<evidence type="ECO:0000255" key="1">
    <source>
        <dbReference type="HAMAP-Rule" id="MF_00300"/>
    </source>
</evidence>
<accession>Q8DYU6</accession>
<comment type="function">
    <text evidence="1">Catalyzes the anti-1,4-elimination of the C-3 phosphate and the C-6 proR hydrogen from 5-enolpyruvylshikimate-3-phosphate (EPSP) to yield chorismate, which is the branch point compound that serves as the starting substrate for the three terminal pathways of aromatic amino acid biosynthesis. This reaction introduces a second double bond into the aromatic ring system.</text>
</comment>
<comment type="catalytic activity">
    <reaction evidence="1">
        <text>5-O-(1-carboxyvinyl)-3-phosphoshikimate = chorismate + phosphate</text>
        <dbReference type="Rhea" id="RHEA:21020"/>
        <dbReference type="ChEBI" id="CHEBI:29748"/>
        <dbReference type="ChEBI" id="CHEBI:43474"/>
        <dbReference type="ChEBI" id="CHEBI:57701"/>
        <dbReference type="EC" id="4.2.3.5"/>
    </reaction>
</comment>
<comment type="cofactor">
    <cofactor evidence="1">
        <name>FMNH2</name>
        <dbReference type="ChEBI" id="CHEBI:57618"/>
    </cofactor>
    <text evidence="1">Reduced FMN (FMNH(2)).</text>
</comment>
<comment type="pathway">
    <text evidence="1">Metabolic intermediate biosynthesis; chorismate biosynthesis; chorismate from D-erythrose 4-phosphate and phosphoenolpyruvate: step 7/7.</text>
</comment>
<comment type="subunit">
    <text evidence="1">Homotetramer.</text>
</comment>
<comment type="similarity">
    <text evidence="1">Belongs to the chorismate synthase family.</text>
</comment>
<reference key="1">
    <citation type="journal article" date="2002" name="Proc. Natl. Acad. Sci. U.S.A.">
        <title>Complete genome sequence and comparative genomic analysis of an emerging human pathogen, serotype V Streptococcus agalactiae.</title>
        <authorList>
            <person name="Tettelin H."/>
            <person name="Masignani V."/>
            <person name="Cieslewicz M.J."/>
            <person name="Eisen J.A."/>
            <person name="Peterson S.N."/>
            <person name="Wessels M.R."/>
            <person name="Paulsen I.T."/>
            <person name="Nelson K.E."/>
            <person name="Margarit I."/>
            <person name="Read T.D."/>
            <person name="Madoff L.C."/>
            <person name="Wolf A.M."/>
            <person name="Beanan M.J."/>
            <person name="Brinkac L.M."/>
            <person name="Daugherty S.C."/>
            <person name="DeBoy R.T."/>
            <person name="Durkin A.S."/>
            <person name="Kolonay J.F."/>
            <person name="Madupu R."/>
            <person name="Lewis M.R."/>
            <person name="Radune D."/>
            <person name="Fedorova N.B."/>
            <person name="Scanlan D."/>
            <person name="Khouri H.M."/>
            <person name="Mulligan S."/>
            <person name="Carty H.A."/>
            <person name="Cline R.T."/>
            <person name="Van Aken S.E."/>
            <person name="Gill J."/>
            <person name="Scarselli M."/>
            <person name="Mora M."/>
            <person name="Iacobini E.T."/>
            <person name="Brettoni C."/>
            <person name="Galli G."/>
            <person name="Mariani M."/>
            <person name="Vegni F."/>
            <person name="Maione D."/>
            <person name="Rinaudo D."/>
            <person name="Rappuoli R."/>
            <person name="Telford J.L."/>
            <person name="Kasper D.L."/>
            <person name="Grandi G."/>
            <person name="Fraser C.M."/>
        </authorList>
    </citation>
    <scope>NUCLEOTIDE SEQUENCE [LARGE SCALE GENOMIC DNA]</scope>
    <source>
        <strain>ATCC BAA-611 / 2603 V/R</strain>
    </source>
</reference>
<keyword id="KW-0028">Amino-acid biosynthesis</keyword>
<keyword id="KW-0057">Aromatic amino acid biosynthesis</keyword>
<keyword id="KW-0274">FAD</keyword>
<keyword id="KW-0285">Flavoprotein</keyword>
<keyword id="KW-0288">FMN</keyword>
<keyword id="KW-0456">Lyase</keyword>
<keyword id="KW-0521">NADP</keyword>
<keyword id="KW-1185">Reference proteome</keyword>
<dbReference type="EC" id="4.2.3.5" evidence="1"/>
<dbReference type="EMBL" id="AE009948">
    <property type="protein sequence ID" value="AAN00248.1"/>
    <property type="molecule type" value="Genomic_DNA"/>
</dbReference>
<dbReference type="RefSeq" id="NP_688375.1">
    <property type="nucleotide sequence ID" value="NC_004116.1"/>
</dbReference>
<dbReference type="RefSeq" id="WP_001269904.1">
    <property type="nucleotide sequence ID" value="NC_004116.1"/>
</dbReference>
<dbReference type="SMR" id="Q8DYU6"/>
<dbReference type="STRING" id="208435.SAG1377"/>
<dbReference type="KEGG" id="sag:SAG1377"/>
<dbReference type="PATRIC" id="fig|208435.3.peg.1385"/>
<dbReference type="HOGENOM" id="CLU_034547_2_0_9"/>
<dbReference type="OrthoDB" id="9771806at2"/>
<dbReference type="UniPathway" id="UPA00053">
    <property type="reaction ID" value="UER00090"/>
</dbReference>
<dbReference type="Proteomes" id="UP000000821">
    <property type="component" value="Chromosome"/>
</dbReference>
<dbReference type="GO" id="GO:0005829">
    <property type="term" value="C:cytosol"/>
    <property type="evidence" value="ECO:0007669"/>
    <property type="project" value="TreeGrafter"/>
</dbReference>
<dbReference type="GO" id="GO:0004107">
    <property type="term" value="F:chorismate synthase activity"/>
    <property type="evidence" value="ECO:0007669"/>
    <property type="project" value="UniProtKB-UniRule"/>
</dbReference>
<dbReference type="GO" id="GO:0010181">
    <property type="term" value="F:FMN binding"/>
    <property type="evidence" value="ECO:0007669"/>
    <property type="project" value="TreeGrafter"/>
</dbReference>
<dbReference type="GO" id="GO:0008652">
    <property type="term" value="P:amino acid biosynthetic process"/>
    <property type="evidence" value="ECO:0007669"/>
    <property type="project" value="UniProtKB-KW"/>
</dbReference>
<dbReference type="GO" id="GO:0009073">
    <property type="term" value="P:aromatic amino acid family biosynthetic process"/>
    <property type="evidence" value="ECO:0007669"/>
    <property type="project" value="UniProtKB-KW"/>
</dbReference>
<dbReference type="GO" id="GO:0009423">
    <property type="term" value="P:chorismate biosynthetic process"/>
    <property type="evidence" value="ECO:0007669"/>
    <property type="project" value="UniProtKB-UniRule"/>
</dbReference>
<dbReference type="CDD" id="cd07304">
    <property type="entry name" value="Chorismate_synthase"/>
    <property type="match status" value="1"/>
</dbReference>
<dbReference type="FunFam" id="3.60.150.10:FF:000002">
    <property type="entry name" value="Chorismate synthase"/>
    <property type="match status" value="1"/>
</dbReference>
<dbReference type="Gene3D" id="3.60.150.10">
    <property type="entry name" value="Chorismate synthase AroC"/>
    <property type="match status" value="1"/>
</dbReference>
<dbReference type="HAMAP" id="MF_00300">
    <property type="entry name" value="Chorismate_synth"/>
    <property type="match status" value="1"/>
</dbReference>
<dbReference type="InterPro" id="IPR000453">
    <property type="entry name" value="Chorismate_synth"/>
</dbReference>
<dbReference type="InterPro" id="IPR035904">
    <property type="entry name" value="Chorismate_synth_AroC_sf"/>
</dbReference>
<dbReference type="InterPro" id="IPR020541">
    <property type="entry name" value="Chorismate_synthase_CS"/>
</dbReference>
<dbReference type="NCBIfam" id="TIGR00033">
    <property type="entry name" value="aroC"/>
    <property type="match status" value="1"/>
</dbReference>
<dbReference type="NCBIfam" id="NF003793">
    <property type="entry name" value="PRK05382.1"/>
    <property type="match status" value="1"/>
</dbReference>
<dbReference type="PANTHER" id="PTHR21085">
    <property type="entry name" value="CHORISMATE SYNTHASE"/>
    <property type="match status" value="1"/>
</dbReference>
<dbReference type="PANTHER" id="PTHR21085:SF0">
    <property type="entry name" value="CHORISMATE SYNTHASE"/>
    <property type="match status" value="1"/>
</dbReference>
<dbReference type="Pfam" id="PF01264">
    <property type="entry name" value="Chorismate_synt"/>
    <property type="match status" value="1"/>
</dbReference>
<dbReference type="PIRSF" id="PIRSF001456">
    <property type="entry name" value="Chorismate_synth"/>
    <property type="match status" value="1"/>
</dbReference>
<dbReference type="SUPFAM" id="SSF103263">
    <property type="entry name" value="Chorismate synthase, AroC"/>
    <property type="match status" value="1"/>
</dbReference>
<dbReference type="PROSITE" id="PS00787">
    <property type="entry name" value="CHORISMATE_SYNTHASE_1"/>
    <property type="match status" value="1"/>
</dbReference>
<dbReference type="PROSITE" id="PS00788">
    <property type="entry name" value="CHORISMATE_SYNTHASE_2"/>
    <property type="match status" value="1"/>
</dbReference>
<dbReference type="PROSITE" id="PS00789">
    <property type="entry name" value="CHORISMATE_SYNTHASE_3"/>
    <property type="match status" value="1"/>
</dbReference>
<sequence>MRYLTAGESHGPSLTAIIEGIPAGLKLSAKDINEDLKRRQGGYGRGNRMKIETDQVIISSGVRHGKTLGSPITLTVTNKDHSKWLDIMSVEDIEERLKQKRRIKHPRPGHADLVGGIKYRFDDLRNALERSSARETTMRVAIGAIAKRILKEIGIEIANHIVVFGGKEITVPDKLTVQQIKVLSSQSQVAIVNPSFEQEIKDYIDSVKKAGDTIGGVVETIVGGVPVGLGSYVHWDRKLDAKIAQAVVSINAFKGVEFGLGFKSGFLKGSQVMDSISWTKDQGYIRQSNNLGGFEGGMTNGEPIIVRGVMKPIPTLYKPLMSVDIDTHEPYRATVERSDPTALPAAGVVMEAVVATVLVTEVLEKFSSDNMYELKEAVKLYRNYVDHF</sequence>